<feature type="chain" id="PRO_0000059311" description="PHD finger protein 20">
    <location>
        <begin position="1"/>
        <end position="1010"/>
    </location>
</feature>
<feature type="domain" description="Tudor 1">
    <location>
        <begin position="4"/>
        <end position="69"/>
    </location>
</feature>
<feature type="domain" description="Tudor 2">
    <location>
        <begin position="83"/>
        <end position="147"/>
    </location>
</feature>
<feature type="DNA-binding region" description="A.T hook">
    <location>
        <begin position="257"/>
        <end position="269"/>
    </location>
</feature>
<feature type="zinc finger region" description="C2H2-type" evidence="3">
    <location>
        <begin position="455"/>
        <end position="485"/>
    </location>
</feature>
<feature type="zinc finger region" description="PHD-type">
    <location>
        <begin position="657"/>
        <end position="703"/>
    </location>
</feature>
<feature type="region of interest" description="Disordered" evidence="4">
    <location>
        <begin position="142"/>
        <end position="373"/>
    </location>
</feature>
<feature type="region of interest" description="Disordered" evidence="4">
    <location>
        <begin position="483"/>
        <end position="609"/>
    </location>
</feature>
<feature type="region of interest" description="Disordered" evidence="4">
    <location>
        <begin position="804"/>
        <end position="827"/>
    </location>
</feature>
<feature type="region of interest" description="Disordered" evidence="4">
    <location>
        <begin position="877"/>
        <end position="902"/>
    </location>
</feature>
<feature type="compositionally biased region" description="Basic and acidic residues" evidence="4">
    <location>
        <begin position="147"/>
        <end position="246"/>
    </location>
</feature>
<feature type="compositionally biased region" description="Polar residues" evidence="4">
    <location>
        <begin position="267"/>
        <end position="280"/>
    </location>
</feature>
<feature type="compositionally biased region" description="Basic and acidic residues" evidence="4">
    <location>
        <begin position="292"/>
        <end position="325"/>
    </location>
</feature>
<feature type="compositionally biased region" description="Basic and acidic residues" evidence="4">
    <location>
        <begin position="483"/>
        <end position="493"/>
    </location>
</feature>
<feature type="compositionally biased region" description="Basic and acidic residues" evidence="4">
    <location>
        <begin position="525"/>
        <end position="541"/>
    </location>
</feature>
<feature type="compositionally biased region" description="Basic residues" evidence="4">
    <location>
        <begin position="542"/>
        <end position="554"/>
    </location>
</feature>
<feature type="compositionally biased region" description="Basic and acidic residues" evidence="4">
    <location>
        <begin position="886"/>
        <end position="902"/>
    </location>
</feature>
<feature type="modified residue" description="Phosphoserine" evidence="2">
    <location>
        <position position="159"/>
    </location>
</feature>
<feature type="modified residue" description="N6-acetyllysine" evidence="2">
    <location>
        <position position="841"/>
    </location>
</feature>
<feature type="modified residue" description="Phosphoserine" evidence="2">
    <location>
        <position position="876"/>
    </location>
</feature>
<feature type="modified residue" description="Phosphoserine" evidence="2">
    <location>
        <position position="878"/>
    </location>
</feature>
<feature type="disulfide bond" description="Interchain (with C-100)" evidence="1">
    <location>
        <position position="96"/>
    </location>
</feature>
<feature type="disulfide bond" description="Interchain (with C-96)" evidence="1">
    <location>
        <position position="100"/>
    </location>
</feature>
<feature type="splice variant" id="VSP_007762" description="In isoform 2." evidence="6">
    <original>MTKHPPNRRGISFEVGAQLEARDRLKNW</original>
    <variation>GAARTVLLSVGLERRSRSGAVR</variation>
    <location>
        <begin position="1"/>
        <end position="28"/>
    </location>
</feature>
<feature type="mutagenesis site" description="Abolishes Methyllysine-binding." evidence="5">
    <original>W</original>
    <variation>A</variation>
    <location>
        <position position="97"/>
    </location>
</feature>
<feature type="mutagenesis site" description="Abolishes Methyllysine-binding." evidence="5">
    <original>Y</original>
    <variation>A</variation>
    <location>
        <position position="103"/>
    </location>
</feature>
<feature type="sequence conflict" description="In Ref. 2; AAH11337." evidence="6" ref="2">
    <original>A</original>
    <variation>T</variation>
    <location>
        <position position="817"/>
    </location>
</feature>
<organism>
    <name type="scientific">Mus musculus</name>
    <name type="common">Mouse</name>
    <dbReference type="NCBI Taxonomy" id="10090"/>
    <lineage>
        <taxon>Eukaryota</taxon>
        <taxon>Metazoa</taxon>
        <taxon>Chordata</taxon>
        <taxon>Craniata</taxon>
        <taxon>Vertebrata</taxon>
        <taxon>Euteleostomi</taxon>
        <taxon>Mammalia</taxon>
        <taxon>Eutheria</taxon>
        <taxon>Euarchontoglires</taxon>
        <taxon>Glires</taxon>
        <taxon>Rodentia</taxon>
        <taxon>Myomorpha</taxon>
        <taxon>Muroidea</taxon>
        <taxon>Muridae</taxon>
        <taxon>Murinae</taxon>
        <taxon>Mus</taxon>
        <taxon>Mus</taxon>
    </lineage>
</organism>
<sequence>MTKHPPNRRGISFEVGAQLEARDRLKNWYPAHIEDIDYEEGRVLIHFKRWNHRYDEWFCWDSPYLRPLEKIQLRKEGLHDEDGSSEFQINQQVLACWSDCRFYPARVTAVNKDGTYTVKFYDGVVQTVKHIHVKAFSKDQNIVGNARPKETDHKSLSSSPEKREKFKEQRKVTVNVKKDKVEKALKTEKRPKQPDKEGKLICSEKGKVSEKSLPKNEKEDKENISENEREYSGDAQVEKKPEKDLVKNPQENLKEPKRKRGRPPSITPTAVDSNSQTLQPITLELRRRKISKRSDTPLKRPRLDKNSPQEQSKKRSENSDKDLSRRRSSRLSTNGTREILDPDSIVPDLVHTVDTNPLPDKSPSAKDSAEGQLKSPLEAGQVSSALTCHPIGDGLGAADLELNCKSMGENTMKTEPVSPLAEVQEVSTVEVPNTLKKVDDSVTLNVPAVDLDHKFRCKVLDCLKFFRKAKLLHYHMKYFHGMEKSPEPEEGPGKTHVQTRGSAVPDKTSQESLTRKRVSASSPTAKEKEKTKEKKFKELVRVKPKKKKKKKKKTKPECPCSEDISDTSQEPSPPKTFAVTRCGSSHKPGVHMSPQLHGSDNGNHKGKLKTCEEDNLSESSSESFLWSDEEYGQDVDVTTNPDEELEGDDRYDFEVVRCICEVQEENDFMIQCEECQCWQHGVCMGLLEENVPEKYTCYVCQDPPGQRPGFKYWYDKEWLSRGHMHGLAFLDQNYSHQNARKIVATHQLLGDVQRVIQVLHGLQLKMSILQSREHPDLQLWCQPWKQHSGEGRAHPRHIHITDARSEESPSYRTLNGAVEKPSPLPRSVEESYITSEHCYQKPRAYYPAVEQRLVVETRGSALDAAVSPLCENGDDSLSPRLGWPIDQDRSRGDIDPKPSSPKVREYISKNVLPEETPARKLLDRGGEGLVSSQHQWQFNLLTHVESLQDEVTHRMDSIEKELDVLESWLDYTGELEPPEPLARLPQLKHCIKQLLTDLGKVQQIALCCST</sequence>
<reference key="1">
    <citation type="journal article" date="2005" name="Science">
        <title>The transcriptional landscape of the mammalian genome.</title>
        <authorList>
            <person name="Carninci P."/>
            <person name="Kasukawa T."/>
            <person name="Katayama S."/>
            <person name="Gough J."/>
            <person name="Frith M.C."/>
            <person name="Maeda N."/>
            <person name="Oyama R."/>
            <person name="Ravasi T."/>
            <person name="Lenhard B."/>
            <person name="Wells C."/>
            <person name="Kodzius R."/>
            <person name="Shimokawa K."/>
            <person name="Bajic V.B."/>
            <person name="Brenner S.E."/>
            <person name="Batalov S."/>
            <person name="Forrest A.R."/>
            <person name="Zavolan M."/>
            <person name="Davis M.J."/>
            <person name="Wilming L.G."/>
            <person name="Aidinis V."/>
            <person name="Allen J.E."/>
            <person name="Ambesi-Impiombato A."/>
            <person name="Apweiler R."/>
            <person name="Aturaliya R.N."/>
            <person name="Bailey T.L."/>
            <person name="Bansal M."/>
            <person name="Baxter L."/>
            <person name="Beisel K.W."/>
            <person name="Bersano T."/>
            <person name="Bono H."/>
            <person name="Chalk A.M."/>
            <person name="Chiu K.P."/>
            <person name="Choudhary V."/>
            <person name="Christoffels A."/>
            <person name="Clutterbuck D.R."/>
            <person name="Crowe M.L."/>
            <person name="Dalla E."/>
            <person name="Dalrymple B.P."/>
            <person name="de Bono B."/>
            <person name="Della Gatta G."/>
            <person name="di Bernardo D."/>
            <person name="Down T."/>
            <person name="Engstrom P."/>
            <person name="Fagiolini M."/>
            <person name="Faulkner G."/>
            <person name="Fletcher C.F."/>
            <person name="Fukushima T."/>
            <person name="Furuno M."/>
            <person name="Futaki S."/>
            <person name="Gariboldi M."/>
            <person name="Georgii-Hemming P."/>
            <person name="Gingeras T.R."/>
            <person name="Gojobori T."/>
            <person name="Green R.E."/>
            <person name="Gustincich S."/>
            <person name="Harbers M."/>
            <person name="Hayashi Y."/>
            <person name="Hensch T.K."/>
            <person name="Hirokawa N."/>
            <person name="Hill D."/>
            <person name="Huminiecki L."/>
            <person name="Iacono M."/>
            <person name="Ikeo K."/>
            <person name="Iwama A."/>
            <person name="Ishikawa T."/>
            <person name="Jakt M."/>
            <person name="Kanapin A."/>
            <person name="Katoh M."/>
            <person name="Kawasawa Y."/>
            <person name="Kelso J."/>
            <person name="Kitamura H."/>
            <person name="Kitano H."/>
            <person name="Kollias G."/>
            <person name="Krishnan S.P."/>
            <person name="Kruger A."/>
            <person name="Kummerfeld S.K."/>
            <person name="Kurochkin I.V."/>
            <person name="Lareau L.F."/>
            <person name="Lazarevic D."/>
            <person name="Lipovich L."/>
            <person name="Liu J."/>
            <person name="Liuni S."/>
            <person name="McWilliam S."/>
            <person name="Madan Babu M."/>
            <person name="Madera M."/>
            <person name="Marchionni L."/>
            <person name="Matsuda H."/>
            <person name="Matsuzawa S."/>
            <person name="Miki H."/>
            <person name="Mignone F."/>
            <person name="Miyake S."/>
            <person name="Morris K."/>
            <person name="Mottagui-Tabar S."/>
            <person name="Mulder N."/>
            <person name="Nakano N."/>
            <person name="Nakauchi H."/>
            <person name="Ng P."/>
            <person name="Nilsson R."/>
            <person name="Nishiguchi S."/>
            <person name="Nishikawa S."/>
            <person name="Nori F."/>
            <person name="Ohara O."/>
            <person name="Okazaki Y."/>
            <person name="Orlando V."/>
            <person name="Pang K.C."/>
            <person name="Pavan W.J."/>
            <person name="Pavesi G."/>
            <person name="Pesole G."/>
            <person name="Petrovsky N."/>
            <person name="Piazza S."/>
            <person name="Reed J."/>
            <person name="Reid J.F."/>
            <person name="Ring B.Z."/>
            <person name="Ringwald M."/>
            <person name="Rost B."/>
            <person name="Ruan Y."/>
            <person name="Salzberg S.L."/>
            <person name="Sandelin A."/>
            <person name="Schneider C."/>
            <person name="Schoenbach C."/>
            <person name="Sekiguchi K."/>
            <person name="Semple C.A."/>
            <person name="Seno S."/>
            <person name="Sessa L."/>
            <person name="Sheng Y."/>
            <person name="Shibata Y."/>
            <person name="Shimada H."/>
            <person name="Shimada K."/>
            <person name="Silva D."/>
            <person name="Sinclair B."/>
            <person name="Sperling S."/>
            <person name="Stupka E."/>
            <person name="Sugiura K."/>
            <person name="Sultana R."/>
            <person name="Takenaka Y."/>
            <person name="Taki K."/>
            <person name="Tammoja K."/>
            <person name="Tan S.L."/>
            <person name="Tang S."/>
            <person name="Taylor M.S."/>
            <person name="Tegner J."/>
            <person name="Teichmann S.A."/>
            <person name="Ueda H.R."/>
            <person name="van Nimwegen E."/>
            <person name="Verardo R."/>
            <person name="Wei C.L."/>
            <person name="Yagi K."/>
            <person name="Yamanishi H."/>
            <person name="Zabarovsky E."/>
            <person name="Zhu S."/>
            <person name="Zimmer A."/>
            <person name="Hide W."/>
            <person name="Bult C."/>
            <person name="Grimmond S.M."/>
            <person name="Teasdale R.D."/>
            <person name="Liu E.T."/>
            <person name="Brusic V."/>
            <person name="Quackenbush J."/>
            <person name="Wahlestedt C."/>
            <person name="Mattick J.S."/>
            <person name="Hume D.A."/>
            <person name="Kai C."/>
            <person name="Sasaki D."/>
            <person name="Tomaru Y."/>
            <person name="Fukuda S."/>
            <person name="Kanamori-Katayama M."/>
            <person name="Suzuki M."/>
            <person name="Aoki J."/>
            <person name="Arakawa T."/>
            <person name="Iida J."/>
            <person name="Imamura K."/>
            <person name="Itoh M."/>
            <person name="Kato T."/>
            <person name="Kawaji H."/>
            <person name="Kawagashira N."/>
            <person name="Kawashima T."/>
            <person name="Kojima M."/>
            <person name="Kondo S."/>
            <person name="Konno H."/>
            <person name="Nakano K."/>
            <person name="Ninomiya N."/>
            <person name="Nishio T."/>
            <person name="Okada M."/>
            <person name="Plessy C."/>
            <person name="Shibata K."/>
            <person name="Shiraki T."/>
            <person name="Suzuki S."/>
            <person name="Tagami M."/>
            <person name="Waki K."/>
            <person name="Watahiki A."/>
            <person name="Okamura-Oho Y."/>
            <person name="Suzuki H."/>
            <person name="Kawai J."/>
            <person name="Hayashizaki Y."/>
        </authorList>
    </citation>
    <scope>NUCLEOTIDE SEQUENCE [LARGE SCALE MRNA] (ISOFORM 1)</scope>
    <scope>PARTIAL NUCLEOTIDE SEQUENCE [LARGE SCALE MRNA] (ISOFORM 2)</scope>
    <source>
        <strain>C57BL/6J</strain>
        <tissue>Embryo</tissue>
        <tissue>Hypothalamus</tissue>
    </source>
</reference>
<reference key="2">
    <citation type="journal article" date="2004" name="Genome Res.">
        <title>The status, quality, and expansion of the NIH full-length cDNA project: the Mammalian Gene Collection (MGC).</title>
        <authorList>
            <consortium name="The MGC Project Team"/>
        </authorList>
    </citation>
    <scope>NUCLEOTIDE SEQUENCE [LARGE SCALE MRNA] OF 621-1010</scope>
    <source>
        <tissue>Mammary gland</tissue>
    </source>
</reference>
<reference key="3">
    <citation type="journal article" date="2010" name="Cell">
        <title>A tissue-specific atlas of mouse protein phosphorylation and expression.</title>
        <authorList>
            <person name="Huttlin E.L."/>
            <person name="Jedrychowski M.P."/>
            <person name="Elias J.E."/>
            <person name="Goswami T."/>
            <person name="Rad R."/>
            <person name="Beausoleil S.A."/>
            <person name="Villen J."/>
            <person name="Haas W."/>
            <person name="Sowa M.E."/>
            <person name="Gygi S.P."/>
        </authorList>
    </citation>
    <scope>IDENTIFICATION BY MASS SPECTROMETRY [LARGE SCALE ANALYSIS]</scope>
    <source>
        <tissue>Lung</tissue>
        <tissue>Spleen</tissue>
        <tissue>Testis</tissue>
    </source>
</reference>
<reference key="4">
    <citation type="journal article" date="2012" name="J. Biol. Chem.">
        <title>Loss of the methyl-lysine effector molecule PHF20 impacts the expression of genes regulated by the lysine acetyltransferase MOF.</title>
        <authorList>
            <person name="Badeaux A.I."/>
            <person name="Yang Y."/>
            <person name="Cardenas K."/>
            <person name="Vemulapalli V."/>
            <person name="Chen K."/>
            <person name="Kusewitt D."/>
            <person name="Richie E."/>
            <person name="Li W."/>
            <person name="Bedford M.T."/>
        </authorList>
    </citation>
    <scope>FUNCTION</scope>
    <scope>SUBCELLULAR LOCATION</scope>
    <scope>TUDOR DOMAINS</scope>
    <scope>MUTAGENESIS OF TRP-97 AND TYR-103</scope>
    <scope>DISRUPTION PHENOTYPE</scope>
</reference>
<accession>Q8BLG0</accession>
<accession>Q8BMA2</accession>
<accession>Q8BYR4</accession>
<accession>Q921N1</accession>
<proteinExistence type="evidence at protein level"/>
<evidence type="ECO:0000250" key="1"/>
<evidence type="ECO:0000250" key="2">
    <source>
        <dbReference type="UniProtKB" id="Q9BVI0"/>
    </source>
</evidence>
<evidence type="ECO:0000255" key="3">
    <source>
        <dbReference type="PROSITE-ProRule" id="PRU00042"/>
    </source>
</evidence>
<evidence type="ECO:0000256" key="4">
    <source>
        <dbReference type="SAM" id="MobiDB-lite"/>
    </source>
</evidence>
<evidence type="ECO:0000269" key="5">
    <source>
    </source>
</evidence>
<evidence type="ECO:0000305" key="6"/>
<keyword id="KW-0007">Acetylation</keyword>
<keyword id="KW-0025">Alternative splicing</keyword>
<keyword id="KW-0156">Chromatin regulator</keyword>
<keyword id="KW-1015">Disulfide bond</keyword>
<keyword id="KW-0238">DNA-binding</keyword>
<keyword id="KW-0479">Metal-binding</keyword>
<keyword id="KW-0539">Nucleus</keyword>
<keyword id="KW-0597">Phosphoprotein</keyword>
<keyword id="KW-1185">Reference proteome</keyword>
<keyword id="KW-0677">Repeat</keyword>
<keyword id="KW-0804">Transcription</keyword>
<keyword id="KW-0805">Transcription regulation</keyword>
<keyword id="KW-0832">Ubl conjugation</keyword>
<keyword id="KW-0862">Zinc</keyword>
<keyword id="KW-0863">Zinc-finger</keyword>
<comment type="function">
    <text evidence="1 5">Contributes to methyllysine-dependent p53/TP53 stabilization and up-regulation after DNA damage (By similarity). Methyllysine-binding protein, component of the MOF histone acetyltransferase protein complex. Not required for maintaining the global histone H4 'Lys-16' acetylation (H4K16ac) levels or locus specific histone acetylation, but instead works downstream in transcriptional regulation of MOF target genes. As part of the NSL complex it may be involved in acetylation of nucleosomal histone H4 on several lysine residues.</text>
</comment>
<comment type="subunit">
    <text evidence="1">Homodimer; disulfide-linked. Component of some MLL1/MLL complex, at least composed of the core components KMT2A/MLL1, ASH2L, HCFC1, WDR5 and RBBP5, as well as the facultative components BACC1, CHD8, E2F6, HSP70, INO80C, KANSL1, LAS1L, MAX, MCRS1, MGA, MYST1/MOF, PELP1, PHF20, PRP31, RING2, RUVB1/TIP49A, RUVB2/TIP49B, SENP3, TAF1, TAF4, TAF6, TAF7, TAF9 and TEX10. Component of the NSL complex at least composed of MOF/KAT8, KANSL1, KANSL2, KANSL3, MCRS1, PHF20, OGT1/OGT, WDR5 and HCFC1 (By similarity).</text>
</comment>
<comment type="subcellular location">
    <subcellularLocation>
        <location evidence="5">Nucleus</location>
    </subcellularLocation>
</comment>
<comment type="alternative products">
    <event type="alternative splicing"/>
    <isoform>
        <id>Q8BLG0-1</id>
        <name>1</name>
        <sequence type="displayed"/>
    </isoform>
    <isoform>
        <id>Q8BLG0-2</id>
        <name>2</name>
        <sequence type="described" ref="VSP_007762"/>
    </isoform>
</comment>
<comment type="domain">
    <text>The Tudor domain 2 mediates reading of dimethyl-lysine residues.</text>
</comment>
<comment type="domain">
    <text evidence="1">The Tudor domain 1 doesn't bind dimethyl-lysine residues, due to an atypical and occluded aromatic cage.</text>
</comment>
<comment type="PTM">
    <text evidence="2">Ubiquitinated by TRIM26; leading to proteasomal degradation.</text>
</comment>
<comment type="disruption phenotype">
    <text evidence="5">Mice die shortly after birth and display a wide variety of phenotypes within the skeletal and hematopoietic systems.</text>
</comment>
<comment type="miscellaneous">
    <molecule>Isoform 2</molecule>
    <text evidence="6">Incomplete sequence.</text>
</comment>
<name>PHF20_MOUSE</name>
<protein>
    <recommendedName>
        <fullName>PHD finger protein 20</fullName>
    </recommendedName>
    <alternativeName>
        <fullName>Hepatocellular carcinoma-associated antigen 58 homolog</fullName>
    </alternativeName>
</protein>
<dbReference type="EMBL" id="AK033017">
    <property type="protein sequence ID" value="BAC28129.1"/>
    <property type="molecule type" value="mRNA"/>
</dbReference>
<dbReference type="EMBL" id="AK038573">
    <property type="protein sequence ID" value="BAC30050.2"/>
    <property type="molecule type" value="mRNA"/>
</dbReference>
<dbReference type="EMBL" id="AK045309">
    <property type="protein sequence ID" value="BAC32304.1"/>
    <property type="molecule type" value="mRNA"/>
</dbReference>
<dbReference type="EMBL" id="BC011337">
    <property type="protein sequence ID" value="AAH11337.1"/>
    <property type="molecule type" value="mRNA"/>
</dbReference>
<dbReference type="CCDS" id="CCDS38297.1">
    <molecule id="Q8BLG0-1"/>
</dbReference>
<dbReference type="RefSeq" id="NP_766262.2">
    <molecule id="Q8BLG0-1"/>
    <property type="nucleotide sequence ID" value="NM_172674.2"/>
</dbReference>
<dbReference type="SMR" id="Q8BLG0"/>
<dbReference type="BioGRID" id="230779">
    <property type="interactions" value="15"/>
</dbReference>
<dbReference type="ComplexPortal" id="CPX-875">
    <property type="entry name" value="NSL histone acetyltransferase complex"/>
</dbReference>
<dbReference type="FunCoup" id="Q8BLG0">
    <property type="interactions" value="3634"/>
</dbReference>
<dbReference type="IntAct" id="Q8BLG0">
    <property type="interactions" value="4"/>
</dbReference>
<dbReference type="STRING" id="10090.ENSMUSP00000043138"/>
<dbReference type="GlyGen" id="Q8BLG0">
    <property type="glycosylation" value="1 site, 1 N-linked glycan (1 site)"/>
</dbReference>
<dbReference type="iPTMnet" id="Q8BLG0"/>
<dbReference type="PhosphoSitePlus" id="Q8BLG0"/>
<dbReference type="jPOST" id="Q8BLG0"/>
<dbReference type="PaxDb" id="10090-ENSMUSP00000043138"/>
<dbReference type="ProteomicsDB" id="288197">
    <molecule id="Q8BLG0-1"/>
</dbReference>
<dbReference type="ProteomicsDB" id="288198">
    <molecule id="Q8BLG0-2"/>
</dbReference>
<dbReference type="Antibodypedia" id="26384">
    <property type="antibodies" value="130 antibodies from 25 providers"/>
</dbReference>
<dbReference type="Ensembl" id="ENSMUST00000037401.10">
    <molecule id="Q8BLG0-1"/>
    <property type="protein sequence ID" value="ENSMUSP00000043138.9"/>
    <property type="gene ID" value="ENSMUSG00000038116.17"/>
</dbReference>
<dbReference type="GeneID" id="228829"/>
<dbReference type="KEGG" id="mmu:228829"/>
<dbReference type="UCSC" id="uc008nmy.1">
    <molecule id="Q8BLG0-1"/>
    <property type="organism name" value="mouse"/>
</dbReference>
<dbReference type="AGR" id="MGI:2444148"/>
<dbReference type="CTD" id="51230"/>
<dbReference type="MGI" id="MGI:2444148">
    <property type="gene designation" value="Phf20"/>
</dbReference>
<dbReference type="VEuPathDB" id="HostDB:ENSMUSG00000038116"/>
<dbReference type="eggNOG" id="KOG1844">
    <property type="taxonomic scope" value="Eukaryota"/>
</dbReference>
<dbReference type="GeneTree" id="ENSGT00940000156477"/>
<dbReference type="HOGENOM" id="CLU_012707_0_0_1"/>
<dbReference type="InParanoid" id="Q8BLG0"/>
<dbReference type="OMA" id="HIHVKPF"/>
<dbReference type="OrthoDB" id="161570at2759"/>
<dbReference type="PhylomeDB" id="Q8BLG0"/>
<dbReference type="TreeFam" id="TF106475"/>
<dbReference type="Reactome" id="R-MMU-3214847">
    <property type="pathway name" value="HATs acetylate histones"/>
</dbReference>
<dbReference type="Reactome" id="R-MMU-6804757">
    <property type="pathway name" value="Regulation of TP53 Degradation"/>
</dbReference>
<dbReference type="Reactome" id="R-MMU-6804759">
    <property type="pathway name" value="Regulation of TP53 Activity through Association with Co-factors"/>
</dbReference>
<dbReference type="Reactome" id="R-MMU-69541">
    <property type="pathway name" value="Stabilization of p53"/>
</dbReference>
<dbReference type="Reactome" id="R-MMU-9772755">
    <property type="pathway name" value="Formation of WDR5-containing histone-modifying complexes"/>
</dbReference>
<dbReference type="BioGRID-ORCS" id="228829">
    <property type="hits" value="5 hits in 82 CRISPR screens"/>
</dbReference>
<dbReference type="ChiTaRS" id="Phf20">
    <property type="organism name" value="mouse"/>
</dbReference>
<dbReference type="PRO" id="PR:Q8BLG0"/>
<dbReference type="Proteomes" id="UP000000589">
    <property type="component" value="Chromosome 2"/>
</dbReference>
<dbReference type="RNAct" id="Q8BLG0">
    <property type="molecule type" value="protein"/>
</dbReference>
<dbReference type="Bgee" id="ENSMUSG00000038116">
    <property type="expression patterns" value="Expressed in animal zygote and 255 other cell types or tissues"/>
</dbReference>
<dbReference type="ExpressionAtlas" id="Q8BLG0">
    <property type="expression patterns" value="baseline and differential"/>
</dbReference>
<dbReference type="GO" id="GO:0005829">
    <property type="term" value="C:cytosol"/>
    <property type="evidence" value="ECO:0007669"/>
    <property type="project" value="Ensembl"/>
</dbReference>
<dbReference type="GO" id="GO:0000123">
    <property type="term" value="C:histone acetyltransferase complex"/>
    <property type="evidence" value="ECO:0000250"/>
    <property type="project" value="UniProtKB"/>
</dbReference>
<dbReference type="GO" id="GO:0071339">
    <property type="term" value="C:MLL1 complex"/>
    <property type="evidence" value="ECO:0000250"/>
    <property type="project" value="UniProtKB"/>
</dbReference>
<dbReference type="GO" id="GO:0044545">
    <property type="term" value="C:NSL complex"/>
    <property type="evidence" value="ECO:0000266"/>
    <property type="project" value="ComplexPortal"/>
</dbReference>
<dbReference type="GO" id="GO:0031965">
    <property type="term" value="C:nuclear membrane"/>
    <property type="evidence" value="ECO:0007669"/>
    <property type="project" value="Ensembl"/>
</dbReference>
<dbReference type="GO" id="GO:0003677">
    <property type="term" value="F:DNA binding"/>
    <property type="evidence" value="ECO:0007669"/>
    <property type="project" value="UniProtKB-KW"/>
</dbReference>
<dbReference type="GO" id="GO:0008270">
    <property type="term" value="F:zinc ion binding"/>
    <property type="evidence" value="ECO:0007669"/>
    <property type="project" value="UniProtKB-KW"/>
</dbReference>
<dbReference type="GO" id="GO:0006325">
    <property type="term" value="P:chromatin organization"/>
    <property type="evidence" value="ECO:0007669"/>
    <property type="project" value="UniProtKB-KW"/>
</dbReference>
<dbReference type="GO" id="GO:0045893">
    <property type="term" value="P:positive regulation of DNA-templated transcription"/>
    <property type="evidence" value="ECO:0000303"/>
    <property type="project" value="ComplexPortal"/>
</dbReference>
<dbReference type="CDD" id="cd20104">
    <property type="entry name" value="MBT_PHF20L1-like"/>
    <property type="match status" value="1"/>
</dbReference>
<dbReference type="CDD" id="cd20453">
    <property type="entry name" value="Tudor_PHF20"/>
    <property type="match status" value="1"/>
</dbReference>
<dbReference type="FunFam" id="2.30.30.140:FF:000043">
    <property type="entry name" value="PHD finger protein 20 (Predicted)"/>
    <property type="match status" value="1"/>
</dbReference>
<dbReference type="FunFam" id="2.30.30.140:FF:000049">
    <property type="entry name" value="PHD finger protein 20 (Predicted)"/>
    <property type="match status" value="1"/>
</dbReference>
<dbReference type="FunFam" id="3.30.40.10:FF:000196">
    <property type="entry name" value="PHD finger protein 20 (Predicted)"/>
    <property type="match status" value="1"/>
</dbReference>
<dbReference type="Gene3D" id="2.30.30.140">
    <property type="match status" value="2"/>
</dbReference>
<dbReference type="Gene3D" id="3.30.40.10">
    <property type="entry name" value="Zinc/RING finger domain, C3HC4 (zinc finger)"/>
    <property type="match status" value="1"/>
</dbReference>
<dbReference type="InterPro" id="IPR041297">
    <property type="entry name" value="Crb2_Tudor"/>
</dbReference>
<dbReference type="InterPro" id="IPR004092">
    <property type="entry name" value="Mbt"/>
</dbReference>
<dbReference type="InterPro" id="IPR043449">
    <property type="entry name" value="PHF20-like"/>
</dbReference>
<dbReference type="InterPro" id="IPR022255">
    <property type="entry name" value="PHF20_AT-hook"/>
</dbReference>
<dbReference type="InterPro" id="IPR002999">
    <property type="entry name" value="Tudor"/>
</dbReference>
<dbReference type="InterPro" id="IPR019786">
    <property type="entry name" value="Zinc_finger_PHD-type_CS"/>
</dbReference>
<dbReference type="InterPro" id="IPR013087">
    <property type="entry name" value="Znf_C2H2_type"/>
</dbReference>
<dbReference type="InterPro" id="IPR011011">
    <property type="entry name" value="Znf_FYVE_PHD"/>
</dbReference>
<dbReference type="InterPro" id="IPR001965">
    <property type="entry name" value="Znf_PHD"/>
</dbReference>
<dbReference type="InterPro" id="IPR013083">
    <property type="entry name" value="Znf_RING/FYVE/PHD"/>
</dbReference>
<dbReference type="PANTHER" id="PTHR15856:SF27">
    <property type="entry name" value="PHD FINGER PROTEIN 20"/>
    <property type="match status" value="1"/>
</dbReference>
<dbReference type="PANTHER" id="PTHR15856">
    <property type="entry name" value="PHD FINGER PROTEIN 20-RELATED"/>
    <property type="match status" value="1"/>
</dbReference>
<dbReference type="Pfam" id="PF02820">
    <property type="entry name" value="MBT"/>
    <property type="match status" value="1"/>
</dbReference>
<dbReference type="Pfam" id="PF20826">
    <property type="entry name" value="PHD_5"/>
    <property type="match status" value="1"/>
</dbReference>
<dbReference type="Pfam" id="PF12618">
    <property type="entry name" value="PHF20_AT-hook"/>
    <property type="match status" value="1"/>
</dbReference>
<dbReference type="Pfam" id="PF18115">
    <property type="entry name" value="Tudor_3"/>
    <property type="match status" value="1"/>
</dbReference>
<dbReference type="SMART" id="SM00249">
    <property type="entry name" value="PHD"/>
    <property type="match status" value="1"/>
</dbReference>
<dbReference type="SMART" id="SM00333">
    <property type="entry name" value="TUDOR"/>
    <property type="match status" value="2"/>
</dbReference>
<dbReference type="SUPFAM" id="SSF57903">
    <property type="entry name" value="FYVE/PHD zinc finger"/>
    <property type="match status" value="1"/>
</dbReference>
<dbReference type="SUPFAM" id="SSF63748">
    <property type="entry name" value="Tudor/PWWP/MBT"/>
    <property type="match status" value="2"/>
</dbReference>
<dbReference type="PROSITE" id="PS01359">
    <property type="entry name" value="ZF_PHD_1"/>
    <property type="match status" value="1"/>
</dbReference>
<dbReference type="PROSITE" id="PS00028">
    <property type="entry name" value="ZINC_FINGER_C2H2_1"/>
    <property type="match status" value="1"/>
</dbReference>
<dbReference type="PROSITE" id="PS50157">
    <property type="entry name" value="ZINC_FINGER_C2H2_2"/>
    <property type="match status" value="1"/>
</dbReference>
<gene>
    <name type="primary">Phf20</name>
    <name type="synonym">Hca58</name>
</gene>